<organism>
    <name type="scientific">Mus musculus</name>
    <name type="common">Mouse</name>
    <dbReference type="NCBI Taxonomy" id="10090"/>
    <lineage>
        <taxon>Eukaryota</taxon>
        <taxon>Metazoa</taxon>
        <taxon>Chordata</taxon>
        <taxon>Craniata</taxon>
        <taxon>Vertebrata</taxon>
        <taxon>Euteleostomi</taxon>
        <taxon>Mammalia</taxon>
        <taxon>Eutheria</taxon>
        <taxon>Euarchontoglires</taxon>
        <taxon>Glires</taxon>
        <taxon>Rodentia</taxon>
        <taxon>Myomorpha</taxon>
        <taxon>Muroidea</taxon>
        <taxon>Muridae</taxon>
        <taxon>Murinae</taxon>
        <taxon>Mus</taxon>
        <taxon>Mus</taxon>
    </lineage>
</organism>
<reference key="1">
    <citation type="journal article" date="2002" name="Acta Biochim. Pol.">
        <title>Mouse cytosolic acetyl-CoA hydrolase, a novel candidate for a key enzyme involved in fat metabolism: cDNA cloning, sequencing and functional expression.</title>
        <authorList>
            <person name="Suematsu N."/>
            <person name="Okamoto K."/>
            <person name="Isohashi F."/>
        </authorList>
    </citation>
    <scope>NUCLEOTIDE SEQUENCE [MRNA]</scope>
    <source>
        <strain>C57BL/6J</strain>
        <tissue>Liver</tissue>
    </source>
</reference>
<reference key="2">
    <citation type="journal article" date="2005" name="Science">
        <title>The transcriptional landscape of the mammalian genome.</title>
        <authorList>
            <person name="Carninci P."/>
            <person name="Kasukawa T."/>
            <person name="Katayama S."/>
            <person name="Gough J."/>
            <person name="Frith M.C."/>
            <person name="Maeda N."/>
            <person name="Oyama R."/>
            <person name="Ravasi T."/>
            <person name="Lenhard B."/>
            <person name="Wells C."/>
            <person name="Kodzius R."/>
            <person name="Shimokawa K."/>
            <person name="Bajic V.B."/>
            <person name="Brenner S.E."/>
            <person name="Batalov S."/>
            <person name="Forrest A.R."/>
            <person name="Zavolan M."/>
            <person name="Davis M.J."/>
            <person name="Wilming L.G."/>
            <person name="Aidinis V."/>
            <person name="Allen J.E."/>
            <person name="Ambesi-Impiombato A."/>
            <person name="Apweiler R."/>
            <person name="Aturaliya R.N."/>
            <person name="Bailey T.L."/>
            <person name="Bansal M."/>
            <person name="Baxter L."/>
            <person name="Beisel K.W."/>
            <person name="Bersano T."/>
            <person name="Bono H."/>
            <person name="Chalk A.M."/>
            <person name="Chiu K.P."/>
            <person name="Choudhary V."/>
            <person name="Christoffels A."/>
            <person name="Clutterbuck D.R."/>
            <person name="Crowe M.L."/>
            <person name="Dalla E."/>
            <person name="Dalrymple B.P."/>
            <person name="de Bono B."/>
            <person name="Della Gatta G."/>
            <person name="di Bernardo D."/>
            <person name="Down T."/>
            <person name="Engstrom P."/>
            <person name="Fagiolini M."/>
            <person name="Faulkner G."/>
            <person name="Fletcher C.F."/>
            <person name="Fukushima T."/>
            <person name="Furuno M."/>
            <person name="Futaki S."/>
            <person name="Gariboldi M."/>
            <person name="Georgii-Hemming P."/>
            <person name="Gingeras T.R."/>
            <person name="Gojobori T."/>
            <person name="Green R.E."/>
            <person name="Gustincich S."/>
            <person name="Harbers M."/>
            <person name="Hayashi Y."/>
            <person name="Hensch T.K."/>
            <person name="Hirokawa N."/>
            <person name="Hill D."/>
            <person name="Huminiecki L."/>
            <person name="Iacono M."/>
            <person name="Ikeo K."/>
            <person name="Iwama A."/>
            <person name="Ishikawa T."/>
            <person name="Jakt M."/>
            <person name="Kanapin A."/>
            <person name="Katoh M."/>
            <person name="Kawasawa Y."/>
            <person name="Kelso J."/>
            <person name="Kitamura H."/>
            <person name="Kitano H."/>
            <person name="Kollias G."/>
            <person name="Krishnan S.P."/>
            <person name="Kruger A."/>
            <person name="Kummerfeld S.K."/>
            <person name="Kurochkin I.V."/>
            <person name="Lareau L.F."/>
            <person name="Lazarevic D."/>
            <person name="Lipovich L."/>
            <person name="Liu J."/>
            <person name="Liuni S."/>
            <person name="McWilliam S."/>
            <person name="Madan Babu M."/>
            <person name="Madera M."/>
            <person name="Marchionni L."/>
            <person name="Matsuda H."/>
            <person name="Matsuzawa S."/>
            <person name="Miki H."/>
            <person name="Mignone F."/>
            <person name="Miyake S."/>
            <person name="Morris K."/>
            <person name="Mottagui-Tabar S."/>
            <person name="Mulder N."/>
            <person name="Nakano N."/>
            <person name="Nakauchi H."/>
            <person name="Ng P."/>
            <person name="Nilsson R."/>
            <person name="Nishiguchi S."/>
            <person name="Nishikawa S."/>
            <person name="Nori F."/>
            <person name="Ohara O."/>
            <person name="Okazaki Y."/>
            <person name="Orlando V."/>
            <person name="Pang K.C."/>
            <person name="Pavan W.J."/>
            <person name="Pavesi G."/>
            <person name="Pesole G."/>
            <person name="Petrovsky N."/>
            <person name="Piazza S."/>
            <person name="Reed J."/>
            <person name="Reid J.F."/>
            <person name="Ring B.Z."/>
            <person name="Ringwald M."/>
            <person name="Rost B."/>
            <person name="Ruan Y."/>
            <person name="Salzberg S.L."/>
            <person name="Sandelin A."/>
            <person name="Schneider C."/>
            <person name="Schoenbach C."/>
            <person name="Sekiguchi K."/>
            <person name="Semple C.A."/>
            <person name="Seno S."/>
            <person name="Sessa L."/>
            <person name="Sheng Y."/>
            <person name="Shibata Y."/>
            <person name="Shimada H."/>
            <person name="Shimada K."/>
            <person name="Silva D."/>
            <person name="Sinclair B."/>
            <person name="Sperling S."/>
            <person name="Stupka E."/>
            <person name="Sugiura K."/>
            <person name="Sultana R."/>
            <person name="Takenaka Y."/>
            <person name="Taki K."/>
            <person name="Tammoja K."/>
            <person name="Tan S.L."/>
            <person name="Tang S."/>
            <person name="Taylor M.S."/>
            <person name="Tegner J."/>
            <person name="Teichmann S.A."/>
            <person name="Ueda H.R."/>
            <person name="van Nimwegen E."/>
            <person name="Verardo R."/>
            <person name="Wei C.L."/>
            <person name="Yagi K."/>
            <person name="Yamanishi H."/>
            <person name="Zabarovsky E."/>
            <person name="Zhu S."/>
            <person name="Zimmer A."/>
            <person name="Hide W."/>
            <person name="Bult C."/>
            <person name="Grimmond S.M."/>
            <person name="Teasdale R.D."/>
            <person name="Liu E.T."/>
            <person name="Brusic V."/>
            <person name="Quackenbush J."/>
            <person name="Wahlestedt C."/>
            <person name="Mattick J.S."/>
            <person name="Hume D.A."/>
            <person name="Kai C."/>
            <person name="Sasaki D."/>
            <person name="Tomaru Y."/>
            <person name="Fukuda S."/>
            <person name="Kanamori-Katayama M."/>
            <person name="Suzuki M."/>
            <person name="Aoki J."/>
            <person name="Arakawa T."/>
            <person name="Iida J."/>
            <person name="Imamura K."/>
            <person name="Itoh M."/>
            <person name="Kato T."/>
            <person name="Kawaji H."/>
            <person name="Kawagashira N."/>
            <person name="Kawashima T."/>
            <person name="Kojima M."/>
            <person name="Kondo S."/>
            <person name="Konno H."/>
            <person name="Nakano K."/>
            <person name="Ninomiya N."/>
            <person name="Nishio T."/>
            <person name="Okada M."/>
            <person name="Plessy C."/>
            <person name="Shibata K."/>
            <person name="Shiraki T."/>
            <person name="Suzuki S."/>
            <person name="Tagami M."/>
            <person name="Waki K."/>
            <person name="Watahiki A."/>
            <person name="Okamura-Oho Y."/>
            <person name="Suzuki H."/>
            <person name="Kawai J."/>
            <person name="Hayashizaki Y."/>
        </authorList>
    </citation>
    <scope>NUCLEOTIDE SEQUENCE [LARGE SCALE MRNA]</scope>
    <source>
        <strain>C57BL/6J</strain>
        <tissue>Embryo</tissue>
        <tissue>Liver</tissue>
    </source>
</reference>
<reference key="3">
    <citation type="journal article" date="2004" name="Genome Res.">
        <title>The status, quality, and expansion of the NIH full-length cDNA project: the Mammalian Gene Collection (MGC).</title>
        <authorList>
            <consortium name="The MGC Project Team"/>
        </authorList>
    </citation>
    <scope>NUCLEOTIDE SEQUENCE [LARGE SCALE MRNA] OF 14-556</scope>
    <source>
        <tissue>Liver</tissue>
    </source>
</reference>
<reference key="4">
    <citation type="journal article" date="2010" name="Cell">
        <title>A tissue-specific atlas of mouse protein phosphorylation and expression.</title>
        <authorList>
            <person name="Huttlin E.L."/>
            <person name="Jedrychowski M.P."/>
            <person name="Elias J.E."/>
            <person name="Goswami T."/>
            <person name="Rad R."/>
            <person name="Beausoleil S.A."/>
            <person name="Villen J."/>
            <person name="Haas W."/>
            <person name="Sowa M.E."/>
            <person name="Gygi S.P."/>
        </authorList>
    </citation>
    <scope>IDENTIFICATION BY MASS SPECTROMETRY [LARGE SCALE ANALYSIS]</scope>
    <source>
        <tissue>Kidney</tissue>
        <tissue>Liver</tissue>
    </source>
</reference>
<reference key="5">
    <citation type="journal article" date="2013" name="Mol. Cell">
        <title>SIRT5-mediated lysine desuccinylation impacts diverse metabolic pathways.</title>
        <authorList>
            <person name="Park J."/>
            <person name="Chen Y."/>
            <person name="Tishkoff D.X."/>
            <person name="Peng C."/>
            <person name="Tan M."/>
            <person name="Dai L."/>
            <person name="Xie Z."/>
            <person name="Zhang Y."/>
            <person name="Zwaans B.M."/>
            <person name="Skinner M.E."/>
            <person name="Lombard D.B."/>
            <person name="Zhao Y."/>
        </authorList>
    </citation>
    <scope>SUCCINYLATION [LARGE SCALE ANALYSIS] AT LYS-34; LYS-97; LYS-160 AND LYS-229</scope>
    <scope>IDENTIFICATION BY MASS SPECTROMETRY [LARGE SCALE ANALYSIS]</scope>
    <source>
        <tissue>Liver</tissue>
    </source>
</reference>
<gene>
    <name type="primary">Acot12</name>
    <name type="synonym">Cach</name>
    <name type="synonym">Cach1</name>
</gene>
<keyword id="KW-0963">Cytoplasm</keyword>
<keyword id="KW-0276">Fatty acid metabolism</keyword>
<keyword id="KW-0378">Hydrolase</keyword>
<keyword id="KW-0443">Lipid metabolism</keyword>
<keyword id="KW-1185">Reference proteome</keyword>
<keyword id="KW-0677">Repeat</keyword>
<keyword id="KW-0719">Serine esterase</keyword>
<name>ACO12_MOUSE</name>
<proteinExistence type="evidence at protein level"/>
<accession>Q9DBK0</accession>
<accession>Q544M5</accession>
<accession>Q8R108</accession>
<sequence>MESMVAPGEVLMSQAIQPAHADSRGELSAGQLLKWMDTTACLAAEKHAGISCVTASMDDILFEDTARIGQIITIRAKVTRAFSTSMEISIKVIVQDKFTGIQKLLCVAFSTFVAKPVGKEKVHLKPVLLQTEQEQVEHNLASERRKVRLQHENTFNNIMKESSRFSDSICNEEEGTATTMGTSVQSIELVLPPHANHHGNTFGGQIMAWMETVATISASRLCHGHPFLKSVDMFKFRGPSTVGDRLVFSAIVNNTFQNSVEVGVRVEAFDCQEWAEGQGRHINSAFLIYNAVDDQEKLITFPRIQPISKDDFRRYQGAIARRRIRLGRKYVISHKKEVPLSAQWDISKKGSLSNTNVEALKNLASKSGWEITTTLEKIKIYTLEEQDAISVKVEKLVGSPAHIAYHLLSDLTKRPLWDPHYISCEVIDQVSEDDQIYYITCSVVNGDKPKDFVVLVSRRKPLKDNNTYTVALRSVVLPSVPSSPQYIRSEVICAGFLIQAVDSNSCTVTYLNQMSDSILPYFAGNIGGWSKSIEEAAASCIKFIENATPDGLKSVL</sequence>
<protein>
    <recommendedName>
        <fullName evidence="6">Acetyl-coenzyme A thioesterase</fullName>
        <ecNumber evidence="2">3.1.2.1</ecNumber>
    </recommendedName>
    <alternativeName>
        <fullName>Acyl-CoA thioester hydrolase 12</fullName>
    </alternativeName>
    <alternativeName>
        <fullName>Acyl-coenzyme A thioesterase 12</fullName>
        <shortName>Acyl-CoA thioesterase 12</shortName>
    </alternativeName>
    <alternativeName>
        <fullName>Cytoplasmic acetyl-CoA hydrolase 1</fullName>
        <shortName>CACH-1</shortName>
        <shortName>mCACH-1</shortName>
    </alternativeName>
</protein>
<comment type="function">
    <text evidence="2">Catalyzes the hydrolysis of acyl-CoAs into free fatty acids and coenzyme A (CoASH), regulating their respective intracellular levels. Preferentially hydrolyzes acetyl-CoA.</text>
</comment>
<comment type="catalytic activity">
    <reaction evidence="2">
        <text>acetyl-CoA + H2O = acetate + CoA + H(+)</text>
        <dbReference type="Rhea" id="RHEA:20289"/>
        <dbReference type="ChEBI" id="CHEBI:15377"/>
        <dbReference type="ChEBI" id="CHEBI:15378"/>
        <dbReference type="ChEBI" id="CHEBI:30089"/>
        <dbReference type="ChEBI" id="CHEBI:57287"/>
        <dbReference type="ChEBI" id="CHEBI:57288"/>
        <dbReference type="EC" id="3.1.2.1"/>
    </reaction>
    <physiologicalReaction direction="left-to-right" evidence="2">
        <dbReference type="Rhea" id="RHEA:20290"/>
    </physiologicalReaction>
</comment>
<comment type="catalytic activity">
    <reaction evidence="3">
        <text>butanoyl-CoA + H2O = butanoate + CoA + H(+)</text>
        <dbReference type="Rhea" id="RHEA:40111"/>
        <dbReference type="ChEBI" id="CHEBI:15377"/>
        <dbReference type="ChEBI" id="CHEBI:15378"/>
        <dbReference type="ChEBI" id="CHEBI:17968"/>
        <dbReference type="ChEBI" id="CHEBI:57287"/>
        <dbReference type="ChEBI" id="CHEBI:57371"/>
    </reaction>
    <physiologicalReaction direction="left-to-right" evidence="3">
        <dbReference type="Rhea" id="RHEA:40112"/>
    </physiologicalReaction>
</comment>
<comment type="catalytic activity">
    <reaction evidence="3">
        <text>hexanoyl-CoA + H2O = hexanoate + CoA + H(+)</text>
        <dbReference type="Rhea" id="RHEA:40115"/>
        <dbReference type="ChEBI" id="CHEBI:15377"/>
        <dbReference type="ChEBI" id="CHEBI:15378"/>
        <dbReference type="ChEBI" id="CHEBI:17120"/>
        <dbReference type="ChEBI" id="CHEBI:57287"/>
        <dbReference type="ChEBI" id="CHEBI:62620"/>
    </reaction>
    <physiologicalReaction direction="left-to-right" evidence="3">
        <dbReference type="Rhea" id="RHEA:40116"/>
    </physiologicalReaction>
</comment>
<comment type="activity regulation">
    <text evidence="2 3">Allosterically regulated by ATP (activator) and ADP (inhibitor) (By similarity). Cold labile, it dissociates into inactive monomers at low temperature (By similarity).</text>
</comment>
<comment type="pathway">
    <text evidence="2">Lipid metabolism; fatty acid metabolism.</text>
</comment>
<comment type="subunit">
    <text evidence="3">Homodimer or homotetramer.</text>
</comment>
<comment type="subcellular location">
    <subcellularLocation>
        <location evidence="2">Cytoplasm</location>
        <location evidence="2">Cytosol</location>
    </subcellularLocation>
</comment>
<evidence type="ECO:0000250" key="1"/>
<evidence type="ECO:0000250" key="2">
    <source>
        <dbReference type="UniProtKB" id="Q8WYK0"/>
    </source>
</evidence>
<evidence type="ECO:0000250" key="3">
    <source>
        <dbReference type="UniProtKB" id="Q99NB7"/>
    </source>
</evidence>
<evidence type="ECO:0000255" key="4">
    <source>
        <dbReference type="PROSITE-ProRule" id="PRU00197"/>
    </source>
</evidence>
<evidence type="ECO:0000255" key="5">
    <source>
        <dbReference type="PROSITE-ProRule" id="PRU01106"/>
    </source>
</evidence>
<evidence type="ECO:0000305" key="6"/>
<evidence type="ECO:0007744" key="7">
    <source>
    </source>
</evidence>
<dbReference type="EC" id="3.1.2.1" evidence="2"/>
<dbReference type="EMBL" id="AB078618">
    <property type="protein sequence ID" value="BAB84021.1"/>
    <property type="molecule type" value="mRNA"/>
</dbReference>
<dbReference type="EMBL" id="AK004905">
    <property type="protein sequence ID" value="BAB23658.1"/>
    <property type="molecule type" value="mRNA"/>
</dbReference>
<dbReference type="EMBL" id="AK034622">
    <property type="protein sequence ID" value="BAC28775.1"/>
    <property type="molecule type" value="mRNA"/>
</dbReference>
<dbReference type="EMBL" id="BC025852">
    <property type="protein sequence ID" value="AAH25852.1"/>
    <property type="molecule type" value="mRNA"/>
</dbReference>
<dbReference type="CCDS" id="CCDS26678.1"/>
<dbReference type="RefSeq" id="NP_083066.1">
    <property type="nucleotide sequence ID" value="NM_028790.4"/>
</dbReference>
<dbReference type="SMR" id="Q9DBK0"/>
<dbReference type="FunCoup" id="Q9DBK0">
    <property type="interactions" value="147"/>
</dbReference>
<dbReference type="STRING" id="10090.ENSMUSP00000022120"/>
<dbReference type="iPTMnet" id="Q9DBK0"/>
<dbReference type="PhosphoSitePlus" id="Q9DBK0"/>
<dbReference type="SwissPalm" id="Q9DBK0"/>
<dbReference type="jPOST" id="Q9DBK0"/>
<dbReference type="PaxDb" id="10090-ENSMUSP00000022120"/>
<dbReference type="ProteomicsDB" id="285706"/>
<dbReference type="Antibodypedia" id="24697">
    <property type="antibodies" value="182 antibodies from 24 providers"/>
</dbReference>
<dbReference type="Ensembl" id="ENSMUST00000022120.5">
    <property type="protein sequence ID" value="ENSMUSP00000022120.5"/>
    <property type="gene ID" value="ENSMUSG00000021620.5"/>
</dbReference>
<dbReference type="GeneID" id="74156"/>
<dbReference type="KEGG" id="mmu:74156"/>
<dbReference type="UCSC" id="uc007rka.1">
    <property type="organism name" value="mouse"/>
</dbReference>
<dbReference type="AGR" id="MGI:1921406"/>
<dbReference type="CTD" id="134526"/>
<dbReference type="MGI" id="MGI:1921406">
    <property type="gene designation" value="Acot12"/>
</dbReference>
<dbReference type="VEuPathDB" id="HostDB:ENSMUSG00000021620"/>
<dbReference type="eggNOG" id="KOG2763">
    <property type="taxonomic scope" value="Eukaryota"/>
</dbReference>
<dbReference type="GeneTree" id="ENSGT00940000160328"/>
<dbReference type="HOGENOM" id="CLU_035725_0_0_1"/>
<dbReference type="InParanoid" id="Q9DBK0"/>
<dbReference type="OMA" id="DPHYMSC"/>
<dbReference type="OrthoDB" id="3184331at2759"/>
<dbReference type="PhylomeDB" id="Q9DBK0"/>
<dbReference type="TreeFam" id="TF328368"/>
<dbReference type="BRENDA" id="3.1.2.1">
    <property type="organism ID" value="3474"/>
</dbReference>
<dbReference type="Reactome" id="R-MMU-77289">
    <property type="pathway name" value="Mitochondrial Fatty Acid Beta-Oxidation"/>
</dbReference>
<dbReference type="UniPathway" id="UPA00199"/>
<dbReference type="BioGRID-ORCS" id="74156">
    <property type="hits" value="2 hits in 77 CRISPR screens"/>
</dbReference>
<dbReference type="PRO" id="PR:Q9DBK0"/>
<dbReference type="Proteomes" id="UP000000589">
    <property type="component" value="Chromosome 13"/>
</dbReference>
<dbReference type="RNAct" id="Q9DBK0">
    <property type="molecule type" value="protein"/>
</dbReference>
<dbReference type="Bgee" id="ENSMUSG00000021620">
    <property type="expression patterns" value="Expressed in right kidney and 50 other cell types or tissues"/>
</dbReference>
<dbReference type="ExpressionAtlas" id="Q9DBK0">
    <property type="expression patterns" value="baseline and differential"/>
</dbReference>
<dbReference type="GO" id="GO:0005829">
    <property type="term" value="C:cytosol"/>
    <property type="evidence" value="ECO:0000304"/>
    <property type="project" value="MGI"/>
</dbReference>
<dbReference type="GO" id="GO:0045171">
    <property type="term" value="C:intercellular bridge"/>
    <property type="evidence" value="ECO:0007669"/>
    <property type="project" value="Ensembl"/>
</dbReference>
<dbReference type="GO" id="GO:0005654">
    <property type="term" value="C:nucleoplasm"/>
    <property type="evidence" value="ECO:0007669"/>
    <property type="project" value="Ensembl"/>
</dbReference>
<dbReference type="GO" id="GO:0003986">
    <property type="term" value="F:acetyl-CoA hydrolase activity"/>
    <property type="evidence" value="ECO:0000314"/>
    <property type="project" value="MGI"/>
</dbReference>
<dbReference type="GO" id="GO:0005524">
    <property type="term" value="F:ATP binding"/>
    <property type="evidence" value="ECO:0000314"/>
    <property type="project" value="MGI"/>
</dbReference>
<dbReference type="GO" id="GO:0052689">
    <property type="term" value="F:carboxylic ester hydrolase activity"/>
    <property type="evidence" value="ECO:0007669"/>
    <property type="project" value="UniProtKB-KW"/>
</dbReference>
<dbReference type="GO" id="GO:0042802">
    <property type="term" value="F:identical protein binding"/>
    <property type="evidence" value="ECO:0007669"/>
    <property type="project" value="Ensembl"/>
</dbReference>
<dbReference type="GO" id="GO:0008289">
    <property type="term" value="F:lipid binding"/>
    <property type="evidence" value="ECO:0007669"/>
    <property type="project" value="InterPro"/>
</dbReference>
<dbReference type="GO" id="GO:0006084">
    <property type="term" value="P:acetyl-CoA metabolic process"/>
    <property type="evidence" value="ECO:0000314"/>
    <property type="project" value="MGI"/>
</dbReference>
<dbReference type="GO" id="GO:0006631">
    <property type="term" value="P:fatty acid metabolic process"/>
    <property type="evidence" value="ECO:0000304"/>
    <property type="project" value="MGI"/>
</dbReference>
<dbReference type="CDD" id="cd03442">
    <property type="entry name" value="BFIT_BACH"/>
    <property type="match status" value="2"/>
</dbReference>
<dbReference type="FunFam" id="3.10.129.10:FF:000029">
    <property type="entry name" value="Acyl-CoA thioesterase 12"/>
    <property type="match status" value="1"/>
</dbReference>
<dbReference type="FunFam" id="3.30.530.20:FF:000023">
    <property type="entry name" value="Acyl-CoA thioesterase 12"/>
    <property type="match status" value="1"/>
</dbReference>
<dbReference type="FunFam" id="3.10.129.10:FF:000011">
    <property type="entry name" value="Acyl-coenzyme A thioesterase 11"/>
    <property type="match status" value="1"/>
</dbReference>
<dbReference type="Gene3D" id="3.30.530.20">
    <property type="match status" value="1"/>
</dbReference>
<dbReference type="Gene3D" id="3.10.129.10">
    <property type="entry name" value="Hotdog Thioesterase"/>
    <property type="match status" value="2"/>
</dbReference>
<dbReference type="InterPro" id="IPR040170">
    <property type="entry name" value="Cytosol_ACT"/>
</dbReference>
<dbReference type="InterPro" id="IPR033120">
    <property type="entry name" value="HOTDOG_ACOT"/>
</dbReference>
<dbReference type="InterPro" id="IPR029069">
    <property type="entry name" value="HotDog_dom_sf"/>
</dbReference>
<dbReference type="InterPro" id="IPR023393">
    <property type="entry name" value="START-like_dom_sf"/>
</dbReference>
<dbReference type="InterPro" id="IPR002913">
    <property type="entry name" value="START_lipid-bd_dom"/>
</dbReference>
<dbReference type="InterPro" id="IPR006683">
    <property type="entry name" value="Thioestr_dom"/>
</dbReference>
<dbReference type="PANTHER" id="PTHR11049:SF3">
    <property type="entry name" value="ACETYL-COENZYME A THIOESTERASE"/>
    <property type="match status" value="1"/>
</dbReference>
<dbReference type="PANTHER" id="PTHR11049">
    <property type="entry name" value="ACYL COENZYME A THIOESTER HYDROLASE"/>
    <property type="match status" value="1"/>
</dbReference>
<dbReference type="Pfam" id="PF03061">
    <property type="entry name" value="4HBT"/>
    <property type="match status" value="2"/>
</dbReference>
<dbReference type="Pfam" id="PF01852">
    <property type="entry name" value="START"/>
    <property type="match status" value="1"/>
</dbReference>
<dbReference type="SMART" id="SM00234">
    <property type="entry name" value="START"/>
    <property type="match status" value="1"/>
</dbReference>
<dbReference type="SUPFAM" id="SSF55961">
    <property type="entry name" value="Bet v1-like"/>
    <property type="match status" value="1"/>
</dbReference>
<dbReference type="SUPFAM" id="SSF54637">
    <property type="entry name" value="Thioesterase/thiol ester dehydrase-isomerase"/>
    <property type="match status" value="2"/>
</dbReference>
<dbReference type="PROSITE" id="PS51770">
    <property type="entry name" value="HOTDOG_ACOT"/>
    <property type="match status" value="2"/>
</dbReference>
<dbReference type="PROSITE" id="PS50848">
    <property type="entry name" value="START"/>
    <property type="match status" value="1"/>
</dbReference>
<feature type="chain" id="PRO_0000053810" description="Acetyl-coenzyme A thioesterase">
    <location>
        <begin position="1"/>
        <end position="556"/>
    </location>
</feature>
<feature type="domain" description="HotDog ACOT-type 1" evidence="5">
    <location>
        <begin position="6"/>
        <end position="118"/>
    </location>
</feature>
<feature type="domain" description="HotDog ACOT-type 2" evidence="5">
    <location>
        <begin position="180"/>
        <end position="295"/>
    </location>
</feature>
<feature type="domain" description="START" evidence="4">
    <location>
        <begin position="327"/>
        <end position="536"/>
    </location>
</feature>
<feature type="binding site" evidence="1">
    <location>
        <begin position="54"/>
        <end position="56"/>
    </location>
    <ligand>
        <name>CoA</name>
        <dbReference type="ChEBI" id="CHEBI:57287"/>
    </ligand>
</feature>
<feature type="binding site" evidence="1">
    <location>
        <begin position="83"/>
        <end position="85"/>
    </location>
    <ligand>
        <name>CoA</name>
        <dbReference type="ChEBI" id="CHEBI:57287"/>
    </ligand>
</feature>
<feature type="binding site" evidence="1">
    <location>
        <position position="145"/>
    </location>
    <ligand>
        <name>CoA</name>
        <dbReference type="ChEBI" id="CHEBI:57287"/>
    </ligand>
</feature>
<feature type="binding site" evidence="1">
    <location>
        <begin position="235"/>
        <end position="237"/>
    </location>
    <ligand>
        <name>CoA</name>
        <dbReference type="ChEBI" id="CHEBI:57287"/>
    </ligand>
</feature>
<feature type="modified residue" description="N6-succinyllysine" evidence="7">
    <location>
        <position position="34"/>
    </location>
</feature>
<feature type="modified residue" description="N6-succinyllysine" evidence="7">
    <location>
        <position position="97"/>
    </location>
</feature>
<feature type="modified residue" description="N6-succinyllysine" evidence="7">
    <location>
        <position position="160"/>
    </location>
</feature>
<feature type="modified residue" description="N6-succinyllysine" evidence="7">
    <location>
        <position position="229"/>
    </location>
</feature>